<reference key="1">
    <citation type="journal article" date="2004" name="Nature">
        <title>Genome evolution in yeasts.</title>
        <authorList>
            <person name="Dujon B."/>
            <person name="Sherman D."/>
            <person name="Fischer G."/>
            <person name="Durrens P."/>
            <person name="Casaregola S."/>
            <person name="Lafontaine I."/>
            <person name="de Montigny J."/>
            <person name="Marck C."/>
            <person name="Neuveglise C."/>
            <person name="Talla E."/>
            <person name="Goffard N."/>
            <person name="Frangeul L."/>
            <person name="Aigle M."/>
            <person name="Anthouard V."/>
            <person name="Babour A."/>
            <person name="Barbe V."/>
            <person name="Barnay S."/>
            <person name="Blanchin S."/>
            <person name="Beckerich J.-M."/>
            <person name="Beyne E."/>
            <person name="Bleykasten C."/>
            <person name="Boisrame A."/>
            <person name="Boyer J."/>
            <person name="Cattolico L."/>
            <person name="Confanioleri F."/>
            <person name="de Daruvar A."/>
            <person name="Despons L."/>
            <person name="Fabre E."/>
            <person name="Fairhead C."/>
            <person name="Ferry-Dumazet H."/>
            <person name="Groppi A."/>
            <person name="Hantraye F."/>
            <person name="Hennequin C."/>
            <person name="Jauniaux N."/>
            <person name="Joyet P."/>
            <person name="Kachouri R."/>
            <person name="Kerrest A."/>
            <person name="Koszul R."/>
            <person name="Lemaire M."/>
            <person name="Lesur I."/>
            <person name="Ma L."/>
            <person name="Muller H."/>
            <person name="Nicaud J.-M."/>
            <person name="Nikolski M."/>
            <person name="Oztas S."/>
            <person name="Ozier-Kalogeropoulos O."/>
            <person name="Pellenz S."/>
            <person name="Potier S."/>
            <person name="Richard G.-F."/>
            <person name="Straub M.-L."/>
            <person name="Suleau A."/>
            <person name="Swennen D."/>
            <person name="Tekaia F."/>
            <person name="Wesolowski-Louvel M."/>
            <person name="Westhof E."/>
            <person name="Wirth B."/>
            <person name="Zeniou-Meyer M."/>
            <person name="Zivanovic Y."/>
            <person name="Bolotin-Fukuhara M."/>
            <person name="Thierry A."/>
            <person name="Bouchier C."/>
            <person name="Caudron B."/>
            <person name="Scarpelli C."/>
            <person name="Gaillardin C."/>
            <person name="Weissenbach J."/>
            <person name="Wincker P."/>
            <person name="Souciet J.-L."/>
        </authorList>
    </citation>
    <scope>NUCLEOTIDE SEQUENCE [LARGE SCALE GENOMIC DNA]</scope>
    <source>
        <strain>ATCC 8585 / CBS 2359 / DSM 70799 / NBRC 1267 / NRRL Y-1140 / WM37</strain>
    </source>
</reference>
<proteinExistence type="inferred from homology"/>
<organism>
    <name type="scientific">Kluyveromyces lactis (strain ATCC 8585 / CBS 2359 / DSM 70799 / NBRC 1267 / NRRL Y-1140 / WM37)</name>
    <name type="common">Yeast</name>
    <name type="synonym">Candida sphaerica</name>
    <dbReference type="NCBI Taxonomy" id="284590"/>
    <lineage>
        <taxon>Eukaryota</taxon>
        <taxon>Fungi</taxon>
        <taxon>Dikarya</taxon>
        <taxon>Ascomycota</taxon>
        <taxon>Saccharomycotina</taxon>
        <taxon>Saccharomycetes</taxon>
        <taxon>Saccharomycetales</taxon>
        <taxon>Saccharomycetaceae</taxon>
        <taxon>Kluyveromyces</taxon>
    </lineage>
</organism>
<gene>
    <name type="primary">DHH1</name>
    <name type="ordered locus">KLLA0C16599g</name>
</gene>
<sequence>MGSDTSESNNDWKTQLNIPKKDTRPQTDDVLNTKGRSFEDFYLKRELLMGIFEAGFEKPSPIQEEAIPVAIAGKDILARAKNGTGKTAAFVIPTLEKVKPKLNKIQALIMVPTRELALQTSQVVRTLGKHCGISCMVTTGGTNLRDDIMRLNEPVHILVGTPGRVLDLASRRVTDLSECHLFIMDEADKMLSRDFKVLAEQILGFLPERRQLLLFSATFPVTVKEFMVKHLKNPHEINLMDELTLKGISQFYAFVEEKQKLHCLNTLFSKLQINQAIIFCNSTNRVELLAKKITELGFSCYYSHARMKQSERNKVFHEFRQGKVRTLVCSDLLTRGIDIQAVNVVINFDFPKTAETYLHRIGRSGRFGHLGLAINLINWNDRFNLYKIEQELNTEIAPIPSQIDKSLYVAEDSSAVPIPFPLESLPITANAPQQPANAEPLPPQQTQVQFHAPPQQQQQQQQQQQQQQYQQFPNQQQQQYGQPLMPQNYQQQAYPPQPFPSKGFPQQQYTQAPQ</sequence>
<dbReference type="EC" id="3.6.4.13"/>
<dbReference type="EMBL" id="CR382123">
    <property type="protein sequence ID" value="CAH01793.1"/>
    <property type="molecule type" value="Genomic_DNA"/>
</dbReference>
<dbReference type="RefSeq" id="XP_452942.1">
    <property type="nucleotide sequence ID" value="XM_452942.1"/>
</dbReference>
<dbReference type="SMR" id="Q6CSZ7"/>
<dbReference type="FunCoup" id="Q6CSZ7">
    <property type="interactions" value="1433"/>
</dbReference>
<dbReference type="STRING" id="284590.Q6CSZ7"/>
<dbReference type="PaxDb" id="284590-Q6CSZ7"/>
<dbReference type="KEGG" id="kla:KLLA0_C16599g"/>
<dbReference type="eggNOG" id="KOG0326">
    <property type="taxonomic scope" value="Eukaryota"/>
</dbReference>
<dbReference type="HOGENOM" id="CLU_003041_30_2_1"/>
<dbReference type="InParanoid" id="Q6CSZ7"/>
<dbReference type="OMA" id="TYEDRHT"/>
<dbReference type="Proteomes" id="UP000000598">
    <property type="component" value="Chromosome C"/>
</dbReference>
<dbReference type="GO" id="GO:0000932">
    <property type="term" value="C:P-body"/>
    <property type="evidence" value="ECO:0007669"/>
    <property type="project" value="UniProtKB-SubCell"/>
</dbReference>
<dbReference type="GO" id="GO:0005524">
    <property type="term" value="F:ATP binding"/>
    <property type="evidence" value="ECO:0007669"/>
    <property type="project" value="UniProtKB-KW"/>
</dbReference>
<dbReference type="GO" id="GO:0016887">
    <property type="term" value="F:ATP hydrolysis activity"/>
    <property type="evidence" value="ECO:0007669"/>
    <property type="project" value="RHEA"/>
</dbReference>
<dbReference type="GO" id="GO:0003723">
    <property type="term" value="F:RNA binding"/>
    <property type="evidence" value="ECO:0007669"/>
    <property type="project" value="UniProtKB-KW"/>
</dbReference>
<dbReference type="GO" id="GO:0003724">
    <property type="term" value="F:RNA helicase activity"/>
    <property type="evidence" value="ECO:0007669"/>
    <property type="project" value="UniProtKB-EC"/>
</dbReference>
<dbReference type="GO" id="GO:0006397">
    <property type="term" value="P:mRNA processing"/>
    <property type="evidence" value="ECO:0007669"/>
    <property type="project" value="UniProtKB-KW"/>
</dbReference>
<dbReference type="GO" id="GO:0051028">
    <property type="term" value="P:mRNA transport"/>
    <property type="evidence" value="ECO:0007669"/>
    <property type="project" value="UniProtKB-KW"/>
</dbReference>
<dbReference type="GO" id="GO:0006417">
    <property type="term" value="P:regulation of translation"/>
    <property type="evidence" value="ECO:0007669"/>
    <property type="project" value="UniProtKB-KW"/>
</dbReference>
<dbReference type="CDD" id="cd17940">
    <property type="entry name" value="DEADc_DDX6"/>
    <property type="match status" value="1"/>
</dbReference>
<dbReference type="CDD" id="cd18787">
    <property type="entry name" value="SF2_C_DEAD"/>
    <property type="match status" value="1"/>
</dbReference>
<dbReference type="FunFam" id="3.40.50.300:FF:000114">
    <property type="entry name" value="ATP-dependent RNA helicase DDX6"/>
    <property type="match status" value="1"/>
</dbReference>
<dbReference type="FunFam" id="3.40.50.300:FF:000364">
    <property type="entry name" value="ATP-dependent RNA helicase DDX6"/>
    <property type="match status" value="1"/>
</dbReference>
<dbReference type="Gene3D" id="3.40.50.300">
    <property type="entry name" value="P-loop containing nucleotide triphosphate hydrolases"/>
    <property type="match status" value="2"/>
</dbReference>
<dbReference type="InterPro" id="IPR011545">
    <property type="entry name" value="DEAD/DEAH_box_helicase_dom"/>
</dbReference>
<dbReference type="InterPro" id="IPR014001">
    <property type="entry name" value="Helicase_ATP-bd"/>
</dbReference>
<dbReference type="InterPro" id="IPR001650">
    <property type="entry name" value="Helicase_C-like"/>
</dbReference>
<dbReference type="InterPro" id="IPR027417">
    <property type="entry name" value="P-loop_NTPase"/>
</dbReference>
<dbReference type="InterPro" id="IPR000629">
    <property type="entry name" value="RNA-helicase_DEAD-box_CS"/>
</dbReference>
<dbReference type="InterPro" id="IPR014014">
    <property type="entry name" value="RNA_helicase_DEAD_Q_motif"/>
</dbReference>
<dbReference type="PANTHER" id="PTHR47960">
    <property type="entry name" value="DEAD-BOX ATP-DEPENDENT RNA HELICASE 50"/>
    <property type="match status" value="1"/>
</dbReference>
<dbReference type="Pfam" id="PF00270">
    <property type="entry name" value="DEAD"/>
    <property type="match status" value="1"/>
</dbReference>
<dbReference type="Pfam" id="PF00271">
    <property type="entry name" value="Helicase_C"/>
    <property type="match status" value="1"/>
</dbReference>
<dbReference type="SMART" id="SM00487">
    <property type="entry name" value="DEXDc"/>
    <property type="match status" value="1"/>
</dbReference>
<dbReference type="SMART" id="SM00490">
    <property type="entry name" value="HELICc"/>
    <property type="match status" value="1"/>
</dbReference>
<dbReference type="SUPFAM" id="SSF52540">
    <property type="entry name" value="P-loop containing nucleoside triphosphate hydrolases"/>
    <property type="match status" value="1"/>
</dbReference>
<dbReference type="PROSITE" id="PS00039">
    <property type="entry name" value="DEAD_ATP_HELICASE"/>
    <property type="match status" value="1"/>
</dbReference>
<dbReference type="PROSITE" id="PS51192">
    <property type="entry name" value="HELICASE_ATP_BIND_1"/>
    <property type="match status" value="1"/>
</dbReference>
<dbReference type="PROSITE" id="PS51194">
    <property type="entry name" value="HELICASE_CTER"/>
    <property type="match status" value="1"/>
</dbReference>
<dbReference type="PROSITE" id="PS51195">
    <property type="entry name" value="Q_MOTIF"/>
    <property type="match status" value="1"/>
</dbReference>
<protein>
    <recommendedName>
        <fullName>ATP-dependent RNA helicase DHH1</fullName>
        <ecNumber>3.6.4.13</ecNumber>
    </recommendedName>
</protein>
<keyword id="KW-0067">ATP-binding</keyword>
<keyword id="KW-0963">Cytoplasm</keyword>
<keyword id="KW-0347">Helicase</keyword>
<keyword id="KW-0378">Hydrolase</keyword>
<keyword id="KW-0507">mRNA processing</keyword>
<keyword id="KW-0509">mRNA transport</keyword>
<keyword id="KW-0547">Nucleotide-binding</keyword>
<keyword id="KW-1185">Reference proteome</keyword>
<keyword id="KW-0694">RNA-binding</keyword>
<keyword id="KW-0810">Translation regulation</keyword>
<keyword id="KW-0813">Transport</keyword>
<name>DHH1_KLULA</name>
<evidence type="ECO:0000250" key="1"/>
<evidence type="ECO:0000255" key="2">
    <source>
        <dbReference type="PROSITE-ProRule" id="PRU00541"/>
    </source>
</evidence>
<evidence type="ECO:0000255" key="3">
    <source>
        <dbReference type="PROSITE-ProRule" id="PRU00542"/>
    </source>
</evidence>
<evidence type="ECO:0000256" key="4">
    <source>
        <dbReference type="SAM" id="MobiDB-lite"/>
    </source>
</evidence>
<evidence type="ECO:0000305" key="5"/>
<comment type="function">
    <text evidence="1">ATP-dependent RNA helicase involved in mRNA turnover, and more specifically in mRNA decapping. Is involved in G1/S DNA-damage checkpoint recovery, probably through the regulation of the translational status of a subset of mRNAs. May also have a role in translation and mRNA nuclear export (By similarity).</text>
</comment>
<comment type="catalytic activity">
    <reaction>
        <text>ATP + H2O = ADP + phosphate + H(+)</text>
        <dbReference type="Rhea" id="RHEA:13065"/>
        <dbReference type="ChEBI" id="CHEBI:15377"/>
        <dbReference type="ChEBI" id="CHEBI:15378"/>
        <dbReference type="ChEBI" id="CHEBI:30616"/>
        <dbReference type="ChEBI" id="CHEBI:43474"/>
        <dbReference type="ChEBI" id="CHEBI:456216"/>
        <dbReference type="EC" id="3.6.4.13"/>
    </reaction>
</comment>
<comment type="subcellular location">
    <subcellularLocation>
        <location evidence="1">Cytoplasm</location>
        <location evidence="1">P-body</location>
    </subcellularLocation>
    <text evidence="1">Is concentrated in several cytoplasmic foci called P bodies (or cytoplasmic processing bodies) which represent sites of mRNA decapping and 5' to 3' exonucleotidic decay.</text>
</comment>
<comment type="domain">
    <text>The Q motif is unique to and characteristic of the DEAD box family of RNA helicases and controls ATP binding and hydrolysis.</text>
</comment>
<comment type="similarity">
    <text evidence="5">Belongs to the DEAD box helicase family. DDX6/DHH1 subfamily.</text>
</comment>
<feature type="chain" id="PRO_0000232191" description="ATP-dependent RNA helicase DHH1">
    <location>
        <begin position="1"/>
        <end position="514"/>
    </location>
</feature>
<feature type="domain" description="Helicase ATP-binding" evidence="2">
    <location>
        <begin position="67"/>
        <end position="237"/>
    </location>
</feature>
<feature type="domain" description="Helicase C-terminal" evidence="3">
    <location>
        <begin position="247"/>
        <end position="407"/>
    </location>
</feature>
<feature type="region of interest" description="Disordered" evidence="4">
    <location>
        <begin position="1"/>
        <end position="31"/>
    </location>
</feature>
<feature type="region of interest" description="Disordered" evidence="4">
    <location>
        <begin position="427"/>
        <end position="514"/>
    </location>
</feature>
<feature type="short sequence motif" description="Q motif">
    <location>
        <begin position="36"/>
        <end position="64"/>
    </location>
</feature>
<feature type="short sequence motif" description="DEAD box">
    <location>
        <begin position="185"/>
        <end position="188"/>
    </location>
</feature>
<feature type="compositionally biased region" description="Polar residues" evidence="4">
    <location>
        <begin position="1"/>
        <end position="17"/>
    </location>
</feature>
<feature type="compositionally biased region" description="Low complexity" evidence="4">
    <location>
        <begin position="429"/>
        <end position="494"/>
    </location>
</feature>
<feature type="compositionally biased region" description="Polar residues" evidence="4">
    <location>
        <begin position="504"/>
        <end position="514"/>
    </location>
</feature>
<feature type="binding site" evidence="2">
    <location>
        <begin position="80"/>
        <end position="87"/>
    </location>
    <ligand>
        <name>ATP</name>
        <dbReference type="ChEBI" id="CHEBI:30616"/>
    </ligand>
</feature>
<accession>Q6CSZ7</accession>